<sequence length="513" mass="57302">MPQSAEKILDHAPLFREPEYRQMLAEKKLNFECPHPERLVTDQREYSKGWEYREKNLAREALVVNPAKACQPLGAVFAAAGFERTMSFVHGSQGCVAYYRSHLSRHFKEPASAVSSSMTEDAAVFGGLKNMVDGLANTYALYDPKMIAVSTTCMAEVIGDDLHGFIENAKSEGAVPPEFDVPFAHTPAFVGSHVDGYDSMVKGILEHFWKGQARTQAAGTINIIPGFDGFCVGNNRELQRLLTLMGVSYTFIQDASDQFDTPSDGEYRMYDGGTTIKALRAALNAEATLSLQHYNSRKTLEYCREVGQATAAFHYPLGINATDAFLMKVSAISGREIPETIRLERGRLVDAMADSQSWLHGKTYAIYGDPDFVYAMARFVMETGGEPRHCLATNGTAAWQAEMTELLASSPFGKQAKVWPGKDLWALRSLLFTEPVDLLIGNSYGKYLERDTGTPLIRLMFPIFDRHHHHRFPLMGYQGGLRLLTTILDTIFDRLDRETMQTAVTDYSYDLTR</sequence>
<name>NIFK_SINFN</name>
<evidence type="ECO:0000250" key="1"/>
<evidence type="ECO:0000305" key="2"/>
<comment type="function">
    <text>This molybdenum-iron protein is part of the nitrogenase complex that catalyzes the key enzymatic reactions in nitrogen fixation.</text>
</comment>
<comment type="catalytic activity">
    <reaction>
        <text>N2 + 8 reduced [2Fe-2S]-[ferredoxin] + 16 ATP + 16 H2O = H2 + 8 oxidized [2Fe-2S]-[ferredoxin] + 2 NH4(+) + 16 ADP + 16 phosphate + 6 H(+)</text>
        <dbReference type="Rhea" id="RHEA:21448"/>
        <dbReference type="Rhea" id="RHEA-COMP:10000"/>
        <dbReference type="Rhea" id="RHEA-COMP:10001"/>
        <dbReference type="ChEBI" id="CHEBI:15377"/>
        <dbReference type="ChEBI" id="CHEBI:15378"/>
        <dbReference type="ChEBI" id="CHEBI:17997"/>
        <dbReference type="ChEBI" id="CHEBI:18276"/>
        <dbReference type="ChEBI" id="CHEBI:28938"/>
        <dbReference type="ChEBI" id="CHEBI:30616"/>
        <dbReference type="ChEBI" id="CHEBI:33737"/>
        <dbReference type="ChEBI" id="CHEBI:33738"/>
        <dbReference type="ChEBI" id="CHEBI:43474"/>
        <dbReference type="ChEBI" id="CHEBI:456216"/>
        <dbReference type="EC" id="1.18.6.1"/>
    </reaction>
</comment>
<comment type="cofactor">
    <cofactor evidence="1">
        <name>[8Fe-7S] cluster</name>
        <dbReference type="ChEBI" id="CHEBI:21143"/>
    </cofactor>
    <text evidence="1">Binds 1 [8Fe-7S] cluster per heterodimer.</text>
</comment>
<comment type="subunit">
    <text>Tetramer of two alpha and two beta chains. Forms complex with the iron protein (nitrogenase component 2).</text>
</comment>
<comment type="miscellaneous">
    <text>Ala-188 is present instead of the usual Ser that would serve as a ligand for the 8Fe-7S cluster in the oxidized state.</text>
</comment>
<comment type="similarity">
    <text evidence="2">Belongs to the NifD/NifK/NifE/NifN family.</text>
</comment>
<organism>
    <name type="scientific">Sinorhizobium fredii (strain NBRC 101917 / NGR234)</name>
    <dbReference type="NCBI Taxonomy" id="394"/>
    <lineage>
        <taxon>Bacteria</taxon>
        <taxon>Pseudomonadati</taxon>
        <taxon>Pseudomonadota</taxon>
        <taxon>Alphaproteobacteria</taxon>
        <taxon>Hyphomicrobiales</taxon>
        <taxon>Rhizobiaceae</taxon>
        <taxon>Sinorhizobium/Ensifer group</taxon>
        <taxon>Sinorhizobium</taxon>
    </lineage>
</organism>
<feature type="chain" id="PRO_0000153107" description="Nitrogenase molybdenum-iron protein beta chain">
    <location>
        <begin position="1"/>
        <end position="513"/>
    </location>
</feature>
<feature type="binding site" evidence="1">
    <location>
        <position position="70"/>
    </location>
    <ligand>
        <name>[8Fe-7S] cluster</name>
        <dbReference type="ChEBI" id="CHEBI:21143"/>
        <note>ligand shared with alpha chain</note>
    </ligand>
</feature>
<feature type="binding site" evidence="1">
    <location>
        <position position="95"/>
    </location>
    <ligand>
        <name>[8Fe-7S] cluster</name>
        <dbReference type="ChEBI" id="CHEBI:21143"/>
        <note>ligand shared with alpha chain</note>
    </ligand>
</feature>
<feature type="binding site" evidence="1">
    <location>
        <position position="153"/>
    </location>
    <ligand>
        <name>[8Fe-7S] cluster</name>
        <dbReference type="ChEBI" id="CHEBI:21143"/>
        <note>ligand shared with alpha chain</note>
    </ligand>
</feature>
<dbReference type="EC" id="1.18.6.1"/>
<dbReference type="EMBL" id="U00090">
    <property type="protein sequence ID" value="AAB91901.1"/>
    <property type="molecule type" value="Genomic_DNA"/>
</dbReference>
<dbReference type="EMBL" id="U00090">
    <property type="protein sequence ID" value="AAB91925.1"/>
    <property type="molecule type" value="Genomic_DNA"/>
</dbReference>
<dbReference type="EMBL" id="AH000924">
    <property type="protein sequence ID" value="AAA26327.1"/>
    <property type="molecule type" value="Genomic_DNA"/>
</dbReference>
<dbReference type="PIR" id="PS0046">
    <property type="entry name" value="PS0046"/>
</dbReference>
<dbReference type="PIR" id="T10830">
    <property type="entry name" value="T10830"/>
</dbReference>
<dbReference type="RefSeq" id="NP_444114.1">
    <property type="nucleotide sequence ID" value="NC_000914.2"/>
</dbReference>
<dbReference type="RefSeq" id="NP_444138.1">
    <property type="nucleotide sequence ID" value="NC_000914.2"/>
</dbReference>
<dbReference type="RefSeq" id="WP_010875128.1">
    <property type="nucleotide sequence ID" value="NC_000914.2"/>
</dbReference>
<dbReference type="SMR" id="P19067"/>
<dbReference type="KEGG" id="rhi:NGR_a00870"/>
<dbReference type="KEGG" id="rhi:NGR_a01110"/>
<dbReference type="PATRIC" id="fig|394.7.peg.76"/>
<dbReference type="eggNOG" id="COG2710">
    <property type="taxonomic scope" value="Bacteria"/>
</dbReference>
<dbReference type="HOGENOM" id="CLU_025876_2_0_5"/>
<dbReference type="OrthoDB" id="9800746at2"/>
<dbReference type="Proteomes" id="UP000001054">
    <property type="component" value="Plasmid pNGR234a"/>
</dbReference>
<dbReference type="GO" id="GO:0016612">
    <property type="term" value="C:molybdenum-iron nitrogenase complex"/>
    <property type="evidence" value="ECO:0007669"/>
    <property type="project" value="InterPro"/>
</dbReference>
<dbReference type="GO" id="GO:0005524">
    <property type="term" value="F:ATP binding"/>
    <property type="evidence" value="ECO:0007669"/>
    <property type="project" value="UniProtKB-KW"/>
</dbReference>
<dbReference type="GO" id="GO:0051536">
    <property type="term" value="F:iron-sulfur cluster binding"/>
    <property type="evidence" value="ECO:0007669"/>
    <property type="project" value="UniProtKB-KW"/>
</dbReference>
<dbReference type="GO" id="GO:0046872">
    <property type="term" value="F:metal ion binding"/>
    <property type="evidence" value="ECO:0007669"/>
    <property type="project" value="UniProtKB-KW"/>
</dbReference>
<dbReference type="GO" id="GO:0016163">
    <property type="term" value="F:nitrogenase activity"/>
    <property type="evidence" value="ECO:0007669"/>
    <property type="project" value="UniProtKB-EC"/>
</dbReference>
<dbReference type="GO" id="GO:0009399">
    <property type="term" value="P:nitrogen fixation"/>
    <property type="evidence" value="ECO:0007669"/>
    <property type="project" value="UniProtKB-KW"/>
</dbReference>
<dbReference type="CDD" id="cd01974">
    <property type="entry name" value="Nitrogenase_MoFe_beta"/>
    <property type="match status" value="1"/>
</dbReference>
<dbReference type="Gene3D" id="3.40.50.1980">
    <property type="entry name" value="Nitrogenase molybdenum iron protein domain"/>
    <property type="match status" value="3"/>
</dbReference>
<dbReference type="Gene3D" id="1.20.89.10">
    <property type="entry name" value="Nitrogenase Molybdenum-iron Protein, subunit B, domain 4"/>
    <property type="match status" value="1"/>
</dbReference>
<dbReference type="InterPro" id="IPR050152">
    <property type="entry name" value="ChlB/BchB/BchZ"/>
</dbReference>
<dbReference type="InterPro" id="IPR000510">
    <property type="entry name" value="Nase/OxRdtase_comp1"/>
</dbReference>
<dbReference type="InterPro" id="IPR000318">
    <property type="entry name" value="Nase_comp1_CS"/>
</dbReference>
<dbReference type="InterPro" id="IPR005976">
    <property type="entry name" value="Nase_Mo-Fe_CF_bsu"/>
</dbReference>
<dbReference type="InterPro" id="IPR024564">
    <property type="entry name" value="Nase_Mo-Fe_CF_bsu_N"/>
</dbReference>
<dbReference type="NCBIfam" id="TIGR01286">
    <property type="entry name" value="nifK"/>
    <property type="match status" value="1"/>
</dbReference>
<dbReference type="PANTHER" id="PTHR33712">
    <property type="entry name" value="LIGHT-INDEPENDENT PROTOCHLOROPHYLLIDE REDUCTASE SUBUNIT B"/>
    <property type="match status" value="1"/>
</dbReference>
<dbReference type="PANTHER" id="PTHR33712:SF7">
    <property type="entry name" value="LIGHT-INDEPENDENT PROTOCHLOROPHYLLIDE REDUCTASE SUBUNIT B"/>
    <property type="match status" value="1"/>
</dbReference>
<dbReference type="Pfam" id="PF11844">
    <property type="entry name" value="DUF3364"/>
    <property type="match status" value="1"/>
</dbReference>
<dbReference type="Pfam" id="PF00148">
    <property type="entry name" value="Oxidored_nitro"/>
    <property type="match status" value="1"/>
</dbReference>
<dbReference type="SUPFAM" id="SSF53807">
    <property type="entry name" value="Helical backbone' metal receptor"/>
    <property type="match status" value="1"/>
</dbReference>
<dbReference type="PROSITE" id="PS00699">
    <property type="entry name" value="NITROGENASE_1_1"/>
    <property type="match status" value="1"/>
</dbReference>
<dbReference type="PROSITE" id="PS00090">
    <property type="entry name" value="NITROGENASE_1_2"/>
    <property type="match status" value="1"/>
</dbReference>
<geneLocation type="plasmid">
    <name>sym pNGR234a</name>
</geneLocation>
<proteinExistence type="inferred from homology"/>
<keyword id="KW-0067">ATP-binding</keyword>
<keyword id="KW-0408">Iron</keyword>
<keyword id="KW-0411">Iron-sulfur</keyword>
<keyword id="KW-0479">Metal-binding</keyword>
<keyword id="KW-0535">Nitrogen fixation</keyword>
<keyword id="KW-0547">Nucleotide-binding</keyword>
<keyword id="KW-0560">Oxidoreductase</keyword>
<keyword id="KW-0614">Plasmid</keyword>
<keyword id="KW-1185">Reference proteome</keyword>
<reference key="1">
    <citation type="journal article" date="1997" name="Nature">
        <title>Molecular basis of symbiosis between Rhizobium and legumes.</title>
        <authorList>
            <person name="Freiberg C.A."/>
            <person name="Fellay R."/>
            <person name="Bairoch A."/>
            <person name="Broughton W.J."/>
            <person name="Rosenthal A."/>
            <person name="Perret X."/>
        </authorList>
    </citation>
    <scope>NUCLEOTIDE SEQUENCE [LARGE SCALE GENOMIC DNA]</scope>
    <source>
        <strain>NBRC 101917 / NGR234</strain>
    </source>
</reference>
<reference key="2">
    <citation type="journal article" date="2009" name="Appl. Environ. Microbiol.">
        <title>Rhizobium sp. strain NGR234 possesses a remarkable number of secretion systems.</title>
        <authorList>
            <person name="Schmeisser C."/>
            <person name="Liesegang H."/>
            <person name="Krysciak D."/>
            <person name="Bakkou N."/>
            <person name="Le Quere A."/>
            <person name="Wollherr A."/>
            <person name="Heinemeyer I."/>
            <person name="Morgenstern B."/>
            <person name="Pommerening-Roeser A."/>
            <person name="Flores M."/>
            <person name="Palacios R."/>
            <person name="Brenner S."/>
            <person name="Gottschalk G."/>
            <person name="Schmitz R.A."/>
            <person name="Broughton W.J."/>
            <person name="Perret X."/>
            <person name="Strittmatter A.W."/>
            <person name="Streit W.R."/>
        </authorList>
    </citation>
    <scope>NUCLEOTIDE SEQUENCE [LARGE SCALE GENOMIC DNA]</scope>
    <source>
        <strain>NBRC 101917 / NGR234</strain>
    </source>
</reference>
<reference key="3">
    <citation type="journal article" date="1989" name="Gene">
        <title>Structural and functional analysis of nitrogenase genes from the broad-host-range Rhizobium strain ANU240.</title>
        <authorList>
            <person name="Badenoch-Jones J."/>
            <person name="Holton T.A."/>
            <person name="Morrison C.M."/>
            <person name="Scott K.F."/>
            <person name="Shine J."/>
        </authorList>
    </citation>
    <scope>NUCLEOTIDE SEQUENCE [GENOMIC DNA] OF 132-195</scope>
    <source>
        <strain>ANU 240</strain>
    </source>
</reference>
<gene>
    <name type="primary">nifK1</name>
    <name type="ordered locus">NGR_a01110</name>
    <name type="ORF">y4vM</name>
</gene>
<gene>
    <name type="primary">nifK2</name>
    <name type="ordered locus">NGR_a00870</name>
    <name type="ORF">y4xC</name>
</gene>
<accession>P19067</accession>
<protein>
    <recommendedName>
        <fullName>Nitrogenase molybdenum-iron protein beta chain</fullName>
        <ecNumber>1.18.6.1</ecNumber>
    </recommendedName>
    <alternativeName>
        <fullName>Dinitrogenase</fullName>
    </alternativeName>
    <alternativeName>
        <fullName>Nitrogenase component I</fullName>
    </alternativeName>
</protein>